<comment type="function">
    <text evidence="1">Catalyzes the conversion of dethiobiotin (DTB) to biotin by the insertion of a sulfur atom into dethiobiotin via a radical-based mechanism.</text>
</comment>
<comment type="catalytic activity">
    <reaction evidence="1">
        <text>(4R,5S)-dethiobiotin + (sulfur carrier)-SH + 2 reduced [2Fe-2S]-[ferredoxin] + 2 S-adenosyl-L-methionine = (sulfur carrier)-H + biotin + 2 5'-deoxyadenosine + 2 L-methionine + 2 oxidized [2Fe-2S]-[ferredoxin]</text>
        <dbReference type="Rhea" id="RHEA:22060"/>
        <dbReference type="Rhea" id="RHEA-COMP:10000"/>
        <dbReference type="Rhea" id="RHEA-COMP:10001"/>
        <dbReference type="Rhea" id="RHEA-COMP:14737"/>
        <dbReference type="Rhea" id="RHEA-COMP:14739"/>
        <dbReference type="ChEBI" id="CHEBI:17319"/>
        <dbReference type="ChEBI" id="CHEBI:29917"/>
        <dbReference type="ChEBI" id="CHEBI:33737"/>
        <dbReference type="ChEBI" id="CHEBI:33738"/>
        <dbReference type="ChEBI" id="CHEBI:57586"/>
        <dbReference type="ChEBI" id="CHEBI:57844"/>
        <dbReference type="ChEBI" id="CHEBI:59789"/>
        <dbReference type="ChEBI" id="CHEBI:64428"/>
        <dbReference type="ChEBI" id="CHEBI:149473"/>
        <dbReference type="EC" id="2.8.1.6"/>
    </reaction>
</comment>
<comment type="cofactor">
    <cofactor evidence="1">
        <name>[4Fe-4S] cluster</name>
        <dbReference type="ChEBI" id="CHEBI:49883"/>
    </cofactor>
    <text evidence="1">Binds 1 [4Fe-4S] cluster. The cluster is coordinated with 3 cysteines and an exchangeable S-adenosyl-L-methionine.</text>
</comment>
<comment type="cofactor">
    <cofactor evidence="1">
        <name>[2Fe-2S] cluster</name>
        <dbReference type="ChEBI" id="CHEBI:190135"/>
    </cofactor>
    <text evidence="1">Binds 1 [2Fe-2S] cluster. The cluster is coordinated with 3 cysteines and 1 arginine.</text>
</comment>
<comment type="pathway">
    <text evidence="1">Cofactor biosynthesis; biotin biosynthesis; biotin from 7,8-diaminononanoate: step 2/2.</text>
</comment>
<comment type="subunit">
    <text evidence="1">Homodimer.</text>
</comment>
<comment type="similarity">
    <text evidence="1">Belongs to the radical SAM superfamily. Biotin synthase family.</text>
</comment>
<keyword id="KW-0001">2Fe-2S</keyword>
<keyword id="KW-0004">4Fe-4S</keyword>
<keyword id="KW-0093">Biotin biosynthesis</keyword>
<keyword id="KW-0408">Iron</keyword>
<keyword id="KW-0411">Iron-sulfur</keyword>
<keyword id="KW-0479">Metal-binding</keyword>
<keyword id="KW-0949">S-adenosyl-L-methionine</keyword>
<keyword id="KW-0808">Transferase</keyword>
<evidence type="ECO:0000255" key="1">
    <source>
        <dbReference type="HAMAP-Rule" id="MF_01694"/>
    </source>
</evidence>
<evidence type="ECO:0000255" key="2">
    <source>
        <dbReference type="PROSITE-ProRule" id="PRU01266"/>
    </source>
</evidence>
<organism>
    <name type="scientific">Escherichia coli (strain K12 / DH10B)</name>
    <dbReference type="NCBI Taxonomy" id="316385"/>
    <lineage>
        <taxon>Bacteria</taxon>
        <taxon>Pseudomonadati</taxon>
        <taxon>Pseudomonadota</taxon>
        <taxon>Gammaproteobacteria</taxon>
        <taxon>Enterobacterales</taxon>
        <taxon>Enterobacteriaceae</taxon>
        <taxon>Escherichia</taxon>
    </lineage>
</organism>
<reference key="1">
    <citation type="journal article" date="2008" name="J. Bacteriol.">
        <title>The complete genome sequence of Escherichia coli DH10B: insights into the biology of a laboratory workhorse.</title>
        <authorList>
            <person name="Durfee T."/>
            <person name="Nelson R."/>
            <person name="Baldwin S."/>
            <person name="Plunkett G. III"/>
            <person name="Burland V."/>
            <person name="Mau B."/>
            <person name="Petrosino J.F."/>
            <person name="Qin X."/>
            <person name="Muzny D.M."/>
            <person name="Ayele M."/>
            <person name="Gibbs R.A."/>
            <person name="Csorgo B."/>
            <person name="Posfai G."/>
            <person name="Weinstock G.M."/>
            <person name="Blattner F.R."/>
        </authorList>
    </citation>
    <scope>NUCLEOTIDE SEQUENCE [LARGE SCALE GENOMIC DNA]</scope>
    <source>
        <strain>K12 / DH10B</strain>
    </source>
</reference>
<accession>B1X7A5</accession>
<name>BIOB_ECODH</name>
<dbReference type="EC" id="2.8.1.6" evidence="1"/>
<dbReference type="EMBL" id="CP000948">
    <property type="protein sequence ID" value="ACB01976.1"/>
    <property type="molecule type" value="Genomic_DNA"/>
</dbReference>
<dbReference type="RefSeq" id="WP_000951213.1">
    <property type="nucleotide sequence ID" value="NC_010473.1"/>
</dbReference>
<dbReference type="SMR" id="B1X7A5"/>
<dbReference type="GeneID" id="93776655"/>
<dbReference type="KEGG" id="ecd:ECDH10B_0843"/>
<dbReference type="HOGENOM" id="CLU_033172_1_2_6"/>
<dbReference type="UniPathway" id="UPA00078">
    <property type="reaction ID" value="UER00162"/>
</dbReference>
<dbReference type="GO" id="GO:0051537">
    <property type="term" value="F:2 iron, 2 sulfur cluster binding"/>
    <property type="evidence" value="ECO:0007669"/>
    <property type="project" value="UniProtKB-KW"/>
</dbReference>
<dbReference type="GO" id="GO:0051539">
    <property type="term" value="F:4 iron, 4 sulfur cluster binding"/>
    <property type="evidence" value="ECO:0007669"/>
    <property type="project" value="UniProtKB-KW"/>
</dbReference>
<dbReference type="GO" id="GO:0004076">
    <property type="term" value="F:biotin synthase activity"/>
    <property type="evidence" value="ECO:0007669"/>
    <property type="project" value="UniProtKB-UniRule"/>
</dbReference>
<dbReference type="GO" id="GO:0005506">
    <property type="term" value="F:iron ion binding"/>
    <property type="evidence" value="ECO:0007669"/>
    <property type="project" value="UniProtKB-UniRule"/>
</dbReference>
<dbReference type="GO" id="GO:0009102">
    <property type="term" value="P:biotin biosynthetic process"/>
    <property type="evidence" value="ECO:0007669"/>
    <property type="project" value="UniProtKB-UniRule"/>
</dbReference>
<dbReference type="CDD" id="cd01335">
    <property type="entry name" value="Radical_SAM"/>
    <property type="match status" value="1"/>
</dbReference>
<dbReference type="FunFam" id="3.20.20.70:FF:000011">
    <property type="entry name" value="Biotin synthase"/>
    <property type="match status" value="1"/>
</dbReference>
<dbReference type="Gene3D" id="3.20.20.70">
    <property type="entry name" value="Aldolase class I"/>
    <property type="match status" value="1"/>
</dbReference>
<dbReference type="HAMAP" id="MF_01694">
    <property type="entry name" value="BioB"/>
    <property type="match status" value="1"/>
</dbReference>
<dbReference type="InterPro" id="IPR013785">
    <property type="entry name" value="Aldolase_TIM"/>
</dbReference>
<dbReference type="InterPro" id="IPR010722">
    <property type="entry name" value="BATS_dom"/>
</dbReference>
<dbReference type="InterPro" id="IPR002684">
    <property type="entry name" value="Biotin_synth/BioAB"/>
</dbReference>
<dbReference type="InterPro" id="IPR024177">
    <property type="entry name" value="Biotin_synthase"/>
</dbReference>
<dbReference type="InterPro" id="IPR006638">
    <property type="entry name" value="Elp3/MiaA/NifB-like_rSAM"/>
</dbReference>
<dbReference type="InterPro" id="IPR007197">
    <property type="entry name" value="rSAM"/>
</dbReference>
<dbReference type="NCBIfam" id="TIGR00433">
    <property type="entry name" value="bioB"/>
    <property type="match status" value="1"/>
</dbReference>
<dbReference type="PANTHER" id="PTHR22976">
    <property type="entry name" value="BIOTIN SYNTHASE"/>
    <property type="match status" value="1"/>
</dbReference>
<dbReference type="PANTHER" id="PTHR22976:SF2">
    <property type="entry name" value="BIOTIN SYNTHASE, MITOCHONDRIAL"/>
    <property type="match status" value="1"/>
</dbReference>
<dbReference type="Pfam" id="PF06968">
    <property type="entry name" value="BATS"/>
    <property type="match status" value="1"/>
</dbReference>
<dbReference type="Pfam" id="PF04055">
    <property type="entry name" value="Radical_SAM"/>
    <property type="match status" value="1"/>
</dbReference>
<dbReference type="PIRSF" id="PIRSF001619">
    <property type="entry name" value="Biotin_synth"/>
    <property type="match status" value="1"/>
</dbReference>
<dbReference type="SFLD" id="SFLDG01060">
    <property type="entry name" value="BATS_domain_containing"/>
    <property type="match status" value="1"/>
</dbReference>
<dbReference type="SFLD" id="SFLDF00272">
    <property type="entry name" value="biotin_synthase"/>
    <property type="match status" value="1"/>
</dbReference>
<dbReference type="SMART" id="SM00876">
    <property type="entry name" value="BATS"/>
    <property type="match status" value="1"/>
</dbReference>
<dbReference type="SMART" id="SM00729">
    <property type="entry name" value="Elp3"/>
    <property type="match status" value="1"/>
</dbReference>
<dbReference type="SUPFAM" id="SSF102114">
    <property type="entry name" value="Radical SAM enzymes"/>
    <property type="match status" value="1"/>
</dbReference>
<dbReference type="PROSITE" id="PS51918">
    <property type="entry name" value="RADICAL_SAM"/>
    <property type="match status" value="1"/>
</dbReference>
<sequence length="346" mass="38648">MAHRPRWTLSQVTELFEKPLLDLLFEAQQVHRQHFDPRQVQVSTLLSIKTGACPEDCKYCPQSSRYKTGLEAERLMEVEQVLESARKAKAAGSTRFCMGAAWKNPHERDMPYLEQMVQGVKAMGLEACMTLGTLSESQAQRLANAGLDYYNHNLDTSPEFYGNIITTRTYQERLDTLEKVRDAGIKVCSGGIVGLGETVKDRAGLLLQLANLPTPPESVPINMLVKVKGTPLADNDDVDAFDFIRTIAVARIMMPTSYVRLSAGREQMNEQTQAMCFMAGANSIFYGCKLLTTPNPEEDKDLQLFRKLGLNPQQTAVLAGDNEQQQRLEQALMTPDTDEYYNAAAL</sequence>
<feature type="chain" id="PRO_0000381364" description="Biotin synthase">
    <location>
        <begin position="1"/>
        <end position="346"/>
    </location>
</feature>
<feature type="domain" description="Radical SAM core" evidence="2">
    <location>
        <begin position="38"/>
        <end position="256"/>
    </location>
</feature>
<feature type="binding site" evidence="1">
    <location>
        <position position="53"/>
    </location>
    <ligand>
        <name>[4Fe-4S] cluster</name>
        <dbReference type="ChEBI" id="CHEBI:49883"/>
        <note>4Fe-4S-S-AdoMet</note>
    </ligand>
</feature>
<feature type="binding site" evidence="1">
    <location>
        <position position="57"/>
    </location>
    <ligand>
        <name>[4Fe-4S] cluster</name>
        <dbReference type="ChEBI" id="CHEBI:49883"/>
        <note>4Fe-4S-S-AdoMet</note>
    </ligand>
</feature>
<feature type="binding site" evidence="1">
    <location>
        <position position="60"/>
    </location>
    <ligand>
        <name>[4Fe-4S] cluster</name>
        <dbReference type="ChEBI" id="CHEBI:49883"/>
        <note>4Fe-4S-S-AdoMet</note>
    </ligand>
</feature>
<feature type="binding site" evidence="1">
    <location>
        <position position="97"/>
    </location>
    <ligand>
        <name>[2Fe-2S] cluster</name>
        <dbReference type="ChEBI" id="CHEBI:190135"/>
    </ligand>
</feature>
<feature type="binding site" evidence="1">
    <location>
        <position position="128"/>
    </location>
    <ligand>
        <name>[2Fe-2S] cluster</name>
        <dbReference type="ChEBI" id="CHEBI:190135"/>
    </ligand>
</feature>
<feature type="binding site" evidence="1">
    <location>
        <position position="188"/>
    </location>
    <ligand>
        <name>[2Fe-2S] cluster</name>
        <dbReference type="ChEBI" id="CHEBI:190135"/>
    </ligand>
</feature>
<feature type="binding site" evidence="1">
    <location>
        <position position="260"/>
    </location>
    <ligand>
        <name>[2Fe-2S] cluster</name>
        <dbReference type="ChEBI" id="CHEBI:190135"/>
    </ligand>
</feature>
<gene>
    <name evidence="1" type="primary">bioB</name>
    <name type="ordered locus">ECDH10B_0843</name>
</gene>
<proteinExistence type="inferred from homology"/>
<protein>
    <recommendedName>
        <fullName evidence="1">Biotin synthase</fullName>
        <ecNumber evidence="1">2.8.1.6</ecNumber>
    </recommendedName>
</protein>